<proteinExistence type="inferred from homology"/>
<gene>
    <name evidence="1" type="primary">cowN</name>
    <name type="ordered locus">RPC_3190</name>
</gene>
<comment type="function">
    <text evidence="1">Is required to sustain N(2)-dependent growth in the presence of low levels of carbon monoxide (CO). Probably acts by protecting the N(2) fixation ability of the nitrogenase complex, which is inactivated in the presence of CO.</text>
</comment>
<comment type="similarity">
    <text evidence="1">Belongs to the CowN family.</text>
</comment>
<reference key="1">
    <citation type="submission" date="2006-03" db="EMBL/GenBank/DDBJ databases">
        <title>Complete sequence of Rhodopseudomonas palustris BisB18.</title>
        <authorList>
            <consortium name="US DOE Joint Genome Institute"/>
            <person name="Copeland A."/>
            <person name="Lucas S."/>
            <person name="Lapidus A."/>
            <person name="Barry K."/>
            <person name="Detter J.C."/>
            <person name="Glavina del Rio T."/>
            <person name="Hammon N."/>
            <person name="Israni S."/>
            <person name="Dalin E."/>
            <person name="Tice H."/>
            <person name="Pitluck S."/>
            <person name="Chain P."/>
            <person name="Malfatti S."/>
            <person name="Shin M."/>
            <person name="Vergez L."/>
            <person name="Schmutz J."/>
            <person name="Larimer F."/>
            <person name="Land M."/>
            <person name="Hauser L."/>
            <person name="Pelletier D.A."/>
            <person name="Kyrpides N."/>
            <person name="Anderson I."/>
            <person name="Oda Y."/>
            <person name="Harwood C.S."/>
            <person name="Richardson P."/>
        </authorList>
    </citation>
    <scope>NUCLEOTIDE SEQUENCE [LARGE SCALE GENOMIC DNA]</scope>
    <source>
        <strain>BisB18</strain>
    </source>
</reference>
<evidence type="ECO:0000255" key="1">
    <source>
        <dbReference type="HAMAP-Rule" id="MF_02117"/>
    </source>
</evidence>
<name>COWN_RHOPB</name>
<feature type="chain" id="PRO_0000407269" description="N(2)-fixation sustaining protein CowN">
    <location>
        <begin position="1"/>
        <end position="92"/>
    </location>
</feature>
<accession>Q212F4</accession>
<organism>
    <name type="scientific">Rhodopseudomonas palustris (strain BisB18)</name>
    <dbReference type="NCBI Taxonomy" id="316056"/>
    <lineage>
        <taxon>Bacteria</taxon>
        <taxon>Pseudomonadati</taxon>
        <taxon>Pseudomonadota</taxon>
        <taxon>Alphaproteobacteria</taxon>
        <taxon>Hyphomicrobiales</taxon>
        <taxon>Nitrobacteraceae</taxon>
        <taxon>Rhodopseudomonas</taxon>
    </lineage>
</organism>
<sequence length="92" mass="10739">MNVPFDRYVSFKNADWEGKSQRVMAKLQSHIDAADNPFWGYFAKKRTELNEKQGLDDLRVLHNYLPTLREILEESGDDETLAMLEDLEVTCM</sequence>
<protein>
    <recommendedName>
        <fullName evidence="1">N(2)-fixation sustaining protein CowN</fullName>
    </recommendedName>
    <alternativeName>
        <fullName evidence="1">CO weal-nitrogenase</fullName>
    </alternativeName>
</protein>
<keyword id="KW-0535">Nitrogen fixation</keyword>
<dbReference type="EMBL" id="CP000301">
    <property type="protein sequence ID" value="ABD88732.1"/>
    <property type="molecule type" value="Genomic_DNA"/>
</dbReference>
<dbReference type="SMR" id="Q212F4"/>
<dbReference type="STRING" id="316056.RPC_3190"/>
<dbReference type="KEGG" id="rpc:RPC_3190"/>
<dbReference type="eggNOG" id="ENOG5032TZQ">
    <property type="taxonomic scope" value="Bacteria"/>
</dbReference>
<dbReference type="HOGENOM" id="CLU_149349_0_0_5"/>
<dbReference type="OrthoDB" id="7689335at2"/>
<dbReference type="GO" id="GO:0009399">
    <property type="term" value="P:nitrogen fixation"/>
    <property type="evidence" value="ECO:0007669"/>
    <property type="project" value="UniProtKB-UniRule"/>
</dbReference>
<dbReference type="HAMAP" id="MF_02117">
    <property type="entry name" value="CowN"/>
    <property type="match status" value="1"/>
</dbReference>
<dbReference type="InterPro" id="IPR024899">
    <property type="entry name" value="CowN"/>
</dbReference>
<dbReference type="NCBIfam" id="NF033689">
    <property type="entry name" value="N2Fix_CO_CowN"/>
    <property type="match status" value="1"/>
</dbReference>
<dbReference type="Pfam" id="PF20543">
    <property type="entry name" value="CowN"/>
    <property type="match status" value="1"/>
</dbReference>